<keyword id="KW-0489">Methyltransferase</keyword>
<keyword id="KW-1185">Reference proteome</keyword>
<keyword id="KW-0694">RNA-binding</keyword>
<keyword id="KW-0949">S-adenosyl-L-methionine</keyword>
<keyword id="KW-0808">Transferase</keyword>
<keyword id="KW-0819">tRNA processing</keyword>
<protein>
    <recommendedName>
        <fullName evidence="6">tRNA (adenine(37)-N6)-methyltransferase</fullName>
        <ecNumber evidence="3">2.1.1.-</ecNumber>
    </recommendedName>
    <alternativeName>
        <fullName evidence="7">tRNA methyltransferase O</fullName>
    </alternativeName>
</protein>
<proteinExistence type="evidence at transcript level"/>
<organism>
    <name type="scientific">Rattus norvegicus</name>
    <name type="common">Rat</name>
    <dbReference type="NCBI Taxonomy" id="10116"/>
    <lineage>
        <taxon>Eukaryota</taxon>
        <taxon>Metazoa</taxon>
        <taxon>Chordata</taxon>
        <taxon>Craniata</taxon>
        <taxon>Vertebrata</taxon>
        <taxon>Euteleostomi</taxon>
        <taxon>Mammalia</taxon>
        <taxon>Eutheria</taxon>
        <taxon>Euarchontoglires</taxon>
        <taxon>Glires</taxon>
        <taxon>Rodentia</taxon>
        <taxon>Myomorpha</taxon>
        <taxon>Muroidea</taxon>
        <taxon>Muridae</taxon>
        <taxon>Murinae</taxon>
        <taxon>Rattus</taxon>
    </lineage>
</organism>
<name>TRMO_RAT</name>
<sequence length="431" mass="47595">MRGLEKQGPSATAAPCGCAQPALETGNLLTEPIGYLESCFSAKIGTPRQPSICSQSRACLKIRKSIFNNPEHSLMGLEQFSHVWILFVFHKNGHLNYKAKVQPPRLNGAKTGVFSTRSPHRPNAIGLTLAKLEKVEGGAVYLSGIDMIHGTPVLDIKPYIADYDSPQNLEPQTKHHKLRAAGPSDATANSCDQQLLSGCEKAQPCHSTKEKPKCREHRTSDENSQKFRDTSEIQHTLPEDRERAVDLALESSREETMDEPEDQLGPQELKSFLEEGTDRPRKVEGALVLRGSSAETRWDASCHARTADRVPCSVVPSWVKEAPVATLQVRFTPHAEMDLRKLSSGGASQTSFKYFHSAEEAKCAIEAMLSADPRSVYRRKLCEDRLFFFTVDIAHVTCWFGDGFAEVLRIKLASEPVEVADPEESLVALGS</sequence>
<gene>
    <name evidence="7" type="primary">Trmo</name>
</gene>
<feature type="chain" id="PRO_0000288888" description="tRNA (adenine(37)-N6)-methyltransferase">
    <location>
        <begin position="1"/>
        <end position="431"/>
    </location>
</feature>
<feature type="domain" description="TsaA-like" evidence="4">
    <location>
        <begin position="30"/>
        <end position="168"/>
    </location>
</feature>
<feature type="region of interest" description="Disordered" evidence="5">
    <location>
        <begin position="167"/>
        <end position="189"/>
    </location>
</feature>
<feature type="region of interest" description="Disordered" evidence="5">
    <location>
        <begin position="201"/>
        <end position="243"/>
    </location>
</feature>
<feature type="compositionally biased region" description="Basic and acidic residues" evidence="5">
    <location>
        <begin position="207"/>
        <end position="243"/>
    </location>
</feature>
<feature type="binding site" evidence="1">
    <location>
        <begin position="47"/>
        <end position="49"/>
    </location>
    <ligand>
        <name>S-adenosyl-L-methionine</name>
        <dbReference type="ChEBI" id="CHEBI:59789"/>
    </ligand>
</feature>
<feature type="binding site" evidence="1">
    <location>
        <begin position="90"/>
        <end position="91"/>
    </location>
    <ligand>
        <name>S-adenosyl-L-methionine</name>
        <dbReference type="ChEBI" id="CHEBI:59789"/>
    </ligand>
</feature>
<feature type="binding site" evidence="1">
    <location>
        <position position="117"/>
    </location>
    <ligand>
        <name>S-adenosyl-L-methionine</name>
        <dbReference type="ChEBI" id="CHEBI:59789"/>
    </ligand>
</feature>
<feature type="binding site" evidence="1">
    <location>
        <position position="127"/>
    </location>
    <ligand>
        <name>S-adenosyl-L-methionine</name>
        <dbReference type="ChEBI" id="CHEBI:59789"/>
    </ligand>
</feature>
<feature type="binding site" evidence="1">
    <location>
        <begin position="148"/>
        <end position="151"/>
    </location>
    <ligand>
        <name>S-adenosyl-L-methionine</name>
        <dbReference type="ChEBI" id="CHEBI:59789"/>
    </ligand>
</feature>
<accession>Q4V7E0</accession>
<reference key="1">
    <citation type="journal article" date="2004" name="Genome Res.">
        <title>The status, quality, and expansion of the NIH full-length cDNA project: the Mammalian Gene Collection (MGC).</title>
        <authorList>
            <consortium name="The MGC Project Team"/>
        </authorList>
    </citation>
    <scope>NUCLEOTIDE SEQUENCE [LARGE SCALE MRNA]</scope>
    <source>
        <tissue>Placenta</tissue>
    </source>
</reference>
<comment type="function">
    <text evidence="2 3">S-adenosyl-L-methionine-dependent methyltransferase responsible for the addition of the methyl group in the formation of N6-methyl-N6-threonylcarbamoyladenosine at position 37 (m(6)t(6)A37) of the tRNA anticodon loop of tRNA(Ser)(GCU). The methyl group of m(6)t(6)A37 may improve the efficiency of the tRNA decoding ability. May bind to tRNA.</text>
</comment>
<comment type="catalytic activity">
    <reaction evidence="3">
        <text>N(6)-L-threonylcarbamoyladenosine(37) in tRNA + S-adenosyl-L-methionine = N(6)-methyl,N(6)-L-threonylcarbamoyladenosine(37) in tRNA + S-adenosyl-L-homocysteine + H(+)</text>
        <dbReference type="Rhea" id="RHEA:70027"/>
        <dbReference type="Rhea" id="RHEA-COMP:10163"/>
        <dbReference type="Rhea" id="RHEA-COMP:17808"/>
        <dbReference type="ChEBI" id="CHEBI:15378"/>
        <dbReference type="ChEBI" id="CHEBI:57856"/>
        <dbReference type="ChEBI" id="CHEBI:59789"/>
        <dbReference type="ChEBI" id="CHEBI:74418"/>
        <dbReference type="ChEBI" id="CHEBI:188470"/>
    </reaction>
    <physiologicalReaction direction="left-to-right" evidence="3">
        <dbReference type="Rhea" id="RHEA:70028"/>
    </physiologicalReaction>
</comment>
<comment type="similarity">
    <text evidence="6">Belongs to the tRNA methyltransferase O family.</text>
</comment>
<dbReference type="EC" id="2.1.1.-" evidence="3"/>
<dbReference type="EMBL" id="BC097981">
    <property type="protein sequence ID" value="AAH97981.1"/>
    <property type="molecule type" value="mRNA"/>
</dbReference>
<dbReference type="RefSeq" id="NP_001020823.1">
    <property type="nucleotide sequence ID" value="NM_001025652.1"/>
</dbReference>
<dbReference type="SMR" id="Q4V7E0"/>
<dbReference type="FunCoup" id="Q4V7E0">
    <property type="interactions" value="1727"/>
</dbReference>
<dbReference type="STRING" id="10116.ENSRNOP00000012602"/>
<dbReference type="PhosphoSitePlus" id="Q4V7E0"/>
<dbReference type="PaxDb" id="10116-ENSRNOP00000012602"/>
<dbReference type="Ensembl" id="ENSRNOT00000012602.8">
    <property type="protein sequence ID" value="ENSRNOP00000012602.6"/>
    <property type="gene ID" value="ENSRNOG00000009492.8"/>
</dbReference>
<dbReference type="GeneID" id="298072"/>
<dbReference type="KEGG" id="rno:298072"/>
<dbReference type="UCSC" id="RGD:1305420">
    <property type="organism name" value="rat"/>
</dbReference>
<dbReference type="AGR" id="RGD:1305420"/>
<dbReference type="CTD" id="51531"/>
<dbReference type="RGD" id="1305420">
    <property type="gene designation" value="Trmo"/>
</dbReference>
<dbReference type="eggNOG" id="KOG2942">
    <property type="taxonomic scope" value="Eukaryota"/>
</dbReference>
<dbReference type="GeneTree" id="ENSGT00390000004643"/>
<dbReference type="HOGENOM" id="CLU_013458_1_0_1"/>
<dbReference type="InParanoid" id="Q4V7E0"/>
<dbReference type="OMA" id="IDMIQGT"/>
<dbReference type="OrthoDB" id="4882at2759"/>
<dbReference type="PhylomeDB" id="Q4V7E0"/>
<dbReference type="PRO" id="PR:Q4V7E0"/>
<dbReference type="Proteomes" id="UP000002494">
    <property type="component" value="Chromosome 5"/>
</dbReference>
<dbReference type="Bgee" id="ENSRNOG00000009492">
    <property type="expression patterns" value="Expressed in skeletal muscle tissue and 19 other cell types or tissues"/>
</dbReference>
<dbReference type="GO" id="GO:0003723">
    <property type="term" value="F:RNA binding"/>
    <property type="evidence" value="ECO:0007669"/>
    <property type="project" value="UniProtKB-KW"/>
</dbReference>
<dbReference type="GO" id="GO:0089715">
    <property type="term" value="F:tRNA (L-threonylcarbamoyladenosine(37)-C2) methyltransferase activity"/>
    <property type="evidence" value="ECO:0000250"/>
    <property type="project" value="UniProtKB"/>
</dbReference>
<dbReference type="GO" id="GO:0030488">
    <property type="term" value="P:tRNA methylation"/>
    <property type="evidence" value="ECO:0000250"/>
    <property type="project" value="UniProtKB"/>
</dbReference>
<dbReference type="CDD" id="cd09281">
    <property type="entry name" value="UPF0066"/>
    <property type="match status" value="1"/>
</dbReference>
<dbReference type="FunFam" id="2.40.30.70:FF:000002">
    <property type="entry name" value="tRNA (Adenine(37)-N6)-methyltransferase isoform X1"/>
    <property type="match status" value="1"/>
</dbReference>
<dbReference type="FunFam" id="3.30.2310.10:FF:000002">
    <property type="entry name" value="tRNA methyltransferase O"/>
    <property type="match status" value="1"/>
</dbReference>
<dbReference type="Gene3D" id="2.40.30.70">
    <property type="entry name" value="YaeB-like"/>
    <property type="match status" value="1"/>
</dbReference>
<dbReference type="Gene3D" id="3.30.2310.10">
    <property type="entry name" value="YaeB-like"/>
    <property type="match status" value="1"/>
</dbReference>
<dbReference type="InterPro" id="IPR023370">
    <property type="entry name" value="TrmO-like_N"/>
</dbReference>
<dbReference type="InterPro" id="IPR023368">
    <property type="entry name" value="UPF0066_cons_site"/>
</dbReference>
<dbReference type="InterPro" id="IPR040372">
    <property type="entry name" value="YaeB-like"/>
</dbReference>
<dbReference type="InterPro" id="IPR036413">
    <property type="entry name" value="YaeB-like_sf"/>
</dbReference>
<dbReference type="InterPro" id="IPR036414">
    <property type="entry name" value="YaeB_N_sf"/>
</dbReference>
<dbReference type="NCBIfam" id="TIGR00104">
    <property type="entry name" value="tRNA_TsaA"/>
    <property type="match status" value="1"/>
</dbReference>
<dbReference type="PANTHER" id="PTHR12818">
    <property type="entry name" value="TRNA (ADENINE(37)-N6)-METHYLTRANSFERASE"/>
    <property type="match status" value="1"/>
</dbReference>
<dbReference type="PANTHER" id="PTHR12818:SF0">
    <property type="entry name" value="TRNA (ADENINE(37)-N6)-METHYLTRANSFERASE"/>
    <property type="match status" value="1"/>
</dbReference>
<dbReference type="Pfam" id="PF01980">
    <property type="entry name" value="TrmO_N"/>
    <property type="match status" value="1"/>
</dbReference>
<dbReference type="SUPFAM" id="SSF118196">
    <property type="entry name" value="YaeB-like"/>
    <property type="match status" value="2"/>
</dbReference>
<dbReference type="PROSITE" id="PS01318">
    <property type="entry name" value="TSAA_1"/>
    <property type="match status" value="1"/>
</dbReference>
<dbReference type="PROSITE" id="PS51668">
    <property type="entry name" value="TSAA_2"/>
    <property type="match status" value="1"/>
</dbReference>
<evidence type="ECO:0000250" key="1">
    <source>
        <dbReference type="UniProtKB" id="O29998"/>
    </source>
</evidence>
<evidence type="ECO:0000250" key="2">
    <source>
        <dbReference type="UniProtKB" id="P28634"/>
    </source>
</evidence>
<evidence type="ECO:0000250" key="3">
    <source>
        <dbReference type="UniProtKB" id="Q9BU70"/>
    </source>
</evidence>
<evidence type="ECO:0000255" key="4">
    <source>
        <dbReference type="PROSITE-ProRule" id="PRU01003"/>
    </source>
</evidence>
<evidence type="ECO:0000256" key="5">
    <source>
        <dbReference type="SAM" id="MobiDB-lite"/>
    </source>
</evidence>
<evidence type="ECO:0000305" key="6"/>
<evidence type="ECO:0000312" key="7">
    <source>
        <dbReference type="RGD" id="1305420"/>
    </source>
</evidence>